<accession>P21079</accession>
<organismHost>
    <name type="scientific">Homo sapiens</name>
    <name type="common">Human</name>
    <dbReference type="NCBI Taxonomy" id="9606"/>
</organismHost>
<sequence length="479" mass="55580">MNRNPDQNTFPNITLKIIETYLGRVPSVNEYHMLKLQARNIQKITVFNKDIFVSLVKKNKKRFFSDVDTSASEIKDRILSYFSKQTQTYNIGKLFTIIELQSVLVTTYTDILGVLTIKAPNVISSKISYNVTSMEELARDMLNSMNVAIIDKAKVMGRHNVSSLVKNVNKLMEEYLRRHNKSCICYGSYSLYLINPNIRYGDIDILQTNSRTFLIDLAFLIKFITGNNIILSKIPYLRNYMVIKDENDNHIIDSFNIRQDTMNVVPKIFIDNIYIVDPTFQLLNMIKMFSQIDRLEDLSKDPEKFNARMATMLEYVRYTHGIVFDGKRNNMPMKCIIDENNRIVTVTTKDYFSFKKCLVYLDENVLSSDILDLNADTSCDFESVTNSVYLIHDNIMYTYFSNTILLSDKGKVHEISARGLCAHILLYQMLTSGEYKQCLSDLLNSMMNRDKIPIYSHTERDKKPGRHGFINIEKDIIVF</sequence>
<dbReference type="EC" id="2.7.7.19"/>
<dbReference type="EMBL" id="M35027">
    <property type="protein sequence ID" value="AAA48038.1"/>
    <property type="molecule type" value="Genomic_DNA"/>
</dbReference>
<dbReference type="PIR" id="E42508">
    <property type="entry name" value="E42508"/>
</dbReference>
<dbReference type="SMR" id="P21079"/>
<dbReference type="Proteomes" id="UP000008269">
    <property type="component" value="Segment"/>
</dbReference>
<dbReference type="GO" id="GO:0005524">
    <property type="term" value="F:ATP binding"/>
    <property type="evidence" value="ECO:0007669"/>
    <property type="project" value="UniProtKB-KW"/>
</dbReference>
<dbReference type="GO" id="GO:0046872">
    <property type="term" value="F:metal ion binding"/>
    <property type="evidence" value="ECO:0007669"/>
    <property type="project" value="UniProtKB-KW"/>
</dbReference>
<dbReference type="GO" id="GO:1990817">
    <property type="term" value="F:poly(A) RNA polymerase activity"/>
    <property type="evidence" value="ECO:0007669"/>
    <property type="project" value="UniProtKB-EC"/>
</dbReference>
<dbReference type="GO" id="GO:0006397">
    <property type="term" value="P:mRNA processing"/>
    <property type="evidence" value="ECO:0007669"/>
    <property type="project" value="UniProtKB-KW"/>
</dbReference>
<dbReference type="CDD" id="cd20919">
    <property type="entry name" value="polyA_pol_Pox"/>
    <property type="match status" value="1"/>
</dbReference>
<dbReference type="Gene3D" id="1.20.1270.320">
    <property type="entry name" value="Poxvirus poly(A) polymerase, N domain"/>
    <property type="match status" value="1"/>
</dbReference>
<dbReference type="Gene3D" id="3.30.460.60">
    <property type="entry name" value="Poxvirus poly(A) polymerase, nucleotidyltransferase domain"/>
    <property type="match status" value="1"/>
</dbReference>
<dbReference type="InterPro" id="IPR004976">
    <property type="entry name" value="PolyA_pol_cat_Poxvir"/>
</dbReference>
<dbReference type="InterPro" id="IPR037265">
    <property type="entry name" value="PolyA_pol_cat_sf"/>
</dbReference>
<dbReference type="InterPro" id="IPR024231">
    <property type="entry name" value="PolyA_pol_nucTrfase_Poxvir"/>
</dbReference>
<dbReference type="InterPro" id="IPR038419">
    <property type="entry name" value="PolyA_pol_nucTrfase_sf_Poxvir"/>
</dbReference>
<dbReference type="InterPro" id="IPR024397">
    <property type="entry name" value="Poxvirus_polyA_pol_cat_C"/>
</dbReference>
<dbReference type="InterPro" id="IPR024398">
    <property type="entry name" value="Poxvirus_polyA_pol_cat_N"/>
</dbReference>
<dbReference type="InterPro" id="IPR038337">
    <property type="entry name" value="Poxvirus_polyA_pol_cat_N_sf"/>
</dbReference>
<dbReference type="Pfam" id="PF03296">
    <property type="entry name" value="Pox_polyA_pol"/>
    <property type="match status" value="1"/>
</dbReference>
<dbReference type="Pfam" id="PF12629">
    <property type="entry name" value="Pox_polyA_pol_C"/>
    <property type="match status" value="1"/>
</dbReference>
<dbReference type="Pfam" id="PF12630">
    <property type="entry name" value="Pox_polyA_pol_N"/>
    <property type="match status" value="1"/>
</dbReference>
<dbReference type="PIRSF" id="PIRSF015693">
    <property type="entry name" value="VAC-48L_nuct"/>
    <property type="match status" value="1"/>
</dbReference>
<dbReference type="SUPFAM" id="SSF160957">
    <property type="entry name" value="Poly(A) polymerase catalytic subunit-like"/>
    <property type="match status" value="1"/>
</dbReference>
<gene>
    <name type="primary">OPG063</name>
    <name type="synonym">PAPL</name>
    <name type="ORF">E1L</name>
</gene>
<proteinExistence type="inferred from homology"/>
<evidence type="ECO:0000250" key="1">
    <source>
        <dbReference type="UniProtKB" id="P23371"/>
    </source>
</evidence>
<evidence type="ECO:0000255" key="2">
    <source>
        <dbReference type="PIRSR" id="PIRSR015693-50"/>
    </source>
</evidence>
<evidence type="ECO:0000305" key="3"/>
<keyword id="KW-0067">ATP-binding</keyword>
<keyword id="KW-0106">Calcium</keyword>
<keyword id="KW-0244">Early protein</keyword>
<keyword id="KW-0479">Metal-binding</keyword>
<keyword id="KW-0507">mRNA processing</keyword>
<keyword id="KW-0547">Nucleotide-binding</keyword>
<keyword id="KW-1185">Reference proteome</keyword>
<keyword id="KW-0804">Transcription</keyword>
<keyword id="KW-0808">Transferase</keyword>
<protein>
    <recommendedName>
        <fullName>Poly(A) polymerase catalytic subunit</fullName>
        <ecNumber>2.7.7.19</ecNumber>
    </recommendedName>
    <alternativeName>
        <fullName>Poly(A) polymerase large subunit</fullName>
        <shortName>PAP-L</shortName>
    </alternativeName>
    <alternativeName>
        <fullName>VP55</fullName>
    </alternativeName>
</protein>
<reference key="1">
    <citation type="journal article" date="1990" name="Virology">
        <title>The complete DNA sequence of vaccinia virus.</title>
        <authorList>
            <person name="Goebel S.J."/>
            <person name="Johnson G.P."/>
            <person name="Perkus M.E."/>
            <person name="Davis S.W."/>
            <person name="Winslow J.P."/>
            <person name="Paoletti E."/>
        </authorList>
    </citation>
    <scope>NUCLEOTIDE SEQUENCE [LARGE SCALE GENOMIC DNA]</scope>
</reference>
<reference key="2">
    <citation type="journal article" date="1990" name="Virology">
        <title>Appendix to 'The complete DNA sequence of vaccinia virus'.</title>
        <authorList>
            <person name="Goebel S.J."/>
            <person name="Johnson G.P."/>
            <person name="Perkus M.E."/>
            <person name="Davis S.W."/>
            <person name="Winslow J.P."/>
            <person name="Paoletti E."/>
        </authorList>
    </citation>
    <scope>COMPLETE GENOME</scope>
</reference>
<feature type="chain" id="PRO_0000099106" description="Poly(A) polymerase catalytic subunit">
    <location>
        <begin position="1"/>
        <end position="479"/>
    </location>
</feature>
<feature type="active site" evidence="2">
    <location>
        <position position="202"/>
    </location>
</feature>
<feature type="active site" evidence="2">
    <location>
        <position position="204"/>
    </location>
</feature>
<feature type="binding site" evidence="1">
    <location>
        <position position="202"/>
    </location>
    <ligand>
        <name>Ca(2+)</name>
        <dbReference type="ChEBI" id="CHEBI:29108"/>
        <label>1</label>
    </ligand>
</feature>
<feature type="binding site" evidence="1">
    <location>
        <position position="202"/>
    </location>
    <ligand>
        <name>Ca(2+)</name>
        <dbReference type="ChEBI" id="CHEBI:29108"/>
        <label>2</label>
    </ligand>
</feature>
<feature type="binding site" evidence="1">
    <location>
        <position position="204"/>
    </location>
    <ligand>
        <name>Ca(2+)</name>
        <dbReference type="ChEBI" id="CHEBI:29108"/>
        <label>1</label>
    </ligand>
</feature>
<feature type="binding site" evidence="1">
    <location>
        <position position="204"/>
    </location>
    <ligand>
        <name>Ca(2+)</name>
        <dbReference type="ChEBI" id="CHEBI:29108"/>
        <label>2</label>
    </ligand>
</feature>
<feature type="binding site" evidence="1">
    <location>
        <position position="253"/>
    </location>
    <ligand>
        <name>Ca(2+)</name>
        <dbReference type="ChEBI" id="CHEBI:29108"/>
        <label>2</label>
    </ligand>
</feature>
<organism>
    <name type="scientific">Vaccinia virus (strain Copenhagen)</name>
    <name type="common">VACV</name>
    <dbReference type="NCBI Taxonomy" id="10249"/>
    <lineage>
        <taxon>Viruses</taxon>
        <taxon>Varidnaviria</taxon>
        <taxon>Bamfordvirae</taxon>
        <taxon>Nucleocytoviricota</taxon>
        <taxon>Pokkesviricetes</taxon>
        <taxon>Chitovirales</taxon>
        <taxon>Poxviridae</taxon>
        <taxon>Chordopoxvirinae</taxon>
        <taxon>Orthopoxvirus</taxon>
        <taxon>Vaccinia virus</taxon>
    </lineage>
</organism>
<name>PAP1_VACCC</name>
<comment type="function">
    <text evidence="1">Polymerase that creates the 3'-poly(A) tail of mRNA's.</text>
</comment>
<comment type="catalytic activity">
    <reaction evidence="1">
        <text>RNA(n) + ATP = RNA(n)-3'-adenine ribonucleotide + diphosphate</text>
        <dbReference type="Rhea" id="RHEA:11332"/>
        <dbReference type="Rhea" id="RHEA-COMP:14527"/>
        <dbReference type="Rhea" id="RHEA-COMP:17347"/>
        <dbReference type="ChEBI" id="CHEBI:30616"/>
        <dbReference type="ChEBI" id="CHEBI:33019"/>
        <dbReference type="ChEBI" id="CHEBI:140395"/>
        <dbReference type="ChEBI" id="CHEBI:173115"/>
        <dbReference type="EC" id="2.7.7.19"/>
    </reaction>
</comment>
<comment type="subunit">
    <text evidence="1">Heterodimer of a large (catalytic) subunit and a small (regulatory) subunit.</text>
</comment>
<comment type="induction">
    <text evidence="1">Expressed in the early phase of the viral replicative cycle.</text>
</comment>
<comment type="similarity">
    <text evidence="3">Belongs to the poxviridae poly(A) polymerase catalytic subunit family.</text>
</comment>